<accession>Q5P2Z1</accession>
<comment type="function">
    <text evidence="1">Required for disulfide bond formation in some periplasmic proteins. Acts by oxidizing the DsbA protein.</text>
</comment>
<comment type="subcellular location">
    <subcellularLocation>
        <location evidence="1">Cell inner membrane</location>
        <topology evidence="1">Multi-pass membrane protein</topology>
    </subcellularLocation>
</comment>
<comment type="similarity">
    <text evidence="1">Belongs to the DsbB family.</text>
</comment>
<sequence length="166" mass="17695">MQSFAFSTRALFLGLFAVCAGLLGFGLYLQHAVGLEPCPMCIMQRYAFVAIALTALVAGLHGPGRRGTRAYAAVILLLALAGGGVALRQTWMQLYPPEFAECGPDLEFMLGSFPLADALPMIFQGAGDCSKVDWAFLGLSIANWSLVCLTLVAVFAIMMIARKRGG</sequence>
<evidence type="ECO:0000255" key="1">
    <source>
        <dbReference type="HAMAP-Rule" id="MF_00286"/>
    </source>
</evidence>
<proteinExistence type="inferred from homology"/>
<protein>
    <recommendedName>
        <fullName evidence="1">Disulfide bond formation protein B</fullName>
    </recommendedName>
    <alternativeName>
        <fullName evidence="1">Disulfide oxidoreductase</fullName>
    </alternativeName>
</protein>
<feature type="chain" id="PRO_0000298339" description="Disulfide bond formation protein B">
    <location>
        <begin position="1"/>
        <end position="166"/>
    </location>
</feature>
<feature type="topological domain" description="Cytoplasmic" evidence="1">
    <location>
        <begin position="1"/>
        <end position="11"/>
    </location>
</feature>
<feature type="transmembrane region" description="Helical" evidence="1">
    <location>
        <begin position="12"/>
        <end position="28"/>
    </location>
</feature>
<feature type="topological domain" description="Periplasmic" evidence="1">
    <location>
        <begin position="29"/>
        <end position="46"/>
    </location>
</feature>
<feature type="transmembrane region" description="Helical" evidence="1">
    <location>
        <begin position="47"/>
        <end position="63"/>
    </location>
</feature>
<feature type="topological domain" description="Cytoplasmic" evidence="1">
    <location>
        <begin position="64"/>
        <end position="70"/>
    </location>
</feature>
<feature type="transmembrane region" description="Helical" evidence="1">
    <location>
        <begin position="71"/>
        <end position="87"/>
    </location>
</feature>
<feature type="topological domain" description="Periplasmic" evidence="1">
    <location>
        <begin position="88"/>
        <end position="143"/>
    </location>
</feature>
<feature type="transmembrane region" description="Helical" evidence="1">
    <location>
        <begin position="144"/>
        <end position="162"/>
    </location>
</feature>
<feature type="topological domain" description="Cytoplasmic" evidence="1">
    <location>
        <begin position="163"/>
        <end position="166"/>
    </location>
</feature>
<feature type="disulfide bond" description="Redox-active" evidence="1">
    <location>
        <begin position="38"/>
        <end position="41"/>
    </location>
</feature>
<feature type="disulfide bond" description="Redox-active" evidence="1">
    <location>
        <begin position="102"/>
        <end position="129"/>
    </location>
</feature>
<organism>
    <name type="scientific">Aromatoleum aromaticum (strain DSM 19018 / LMG 30748 / EbN1)</name>
    <name type="common">Azoarcus sp. (strain EbN1)</name>
    <dbReference type="NCBI Taxonomy" id="76114"/>
    <lineage>
        <taxon>Bacteria</taxon>
        <taxon>Pseudomonadati</taxon>
        <taxon>Pseudomonadota</taxon>
        <taxon>Betaproteobacteria</taxon>
        <taxon>Rhodocyclales</taxon>
        <taxon>Rhodocyclaceae</taxon>
        <taxon>Aromatoleum</taxon>
    </lineage>
</organism>
<reference key="1">
    <citation type="journal article" date="2005" name="Arch. Microbiol.">
        <title>The genome sequence of an anaerobic aromatic-degrading denitrifying bacterium, strain EbN1.</title>
        <authorList>
            <person name="Rabus R."/>
            <person name="Kube M."/>
            <person name="Heider J."/>
            <person name="Beck A."/>
            <person name="Heitmann K."/>
            <person name="Widdel F."/>
            <person name="Reinhardt R."/>
        </authorList>
    </citation>
    <scope>NUCLEOTIDE SEQUENCE [LARGE SCALE GENOMIC DNA]</scope>
    <source>
        <strain>DSM 19018 / LMG 30748 / EbN1</strain>
    </source>
</reference>
<dbReference type="EMBL" id="CR555306">
    <property type="protein sequence ID" value="CAI08323.1"/>
    <property type="molecule type" value="Genomic_DNA"/>
</dbReference>
<dbReference type="RefSeq" id="WP_011238011.1">
    <property type="nucleotide sequence ID" value="NC_006513.1"/>
</dbReference>
<dbReference type="SMR" id="Q5P2Z1"/>
<dbReference type="STRING" id="76114.ebA3876"/>
<dbReference type="KEGG" id="eba:ebA3876"/>
<dbReference type="eggNOG" id="COG1495">
    <property type="taxonomic scope" value="Bacteria"/>
</dbReference>
<dbReference type="HOGENOM" id="CLU_098660_1_0_4"/>
<dbReference type="OrthoDB" id="3711263at2"/>
<dbReference type="Proteomes" id="UP000006552">
    <property type="component" value="Chromosome"/>
</dbReference>
<dbReference type="GO" id="GO:0005886">
    <property type="term" value="C:plasma membrane"/>
    <property type="evidence" value="ECO:0007669"/>
    <property type="project" value="UniProtKB-SubCell"/>
</dbReference>
<dbReference type="GO" id="GO:0009055">
    <property type="term" value="F:electron transfer activity"/>
    <property type="evidence" value="ECO:0007669"/>
    <property type="project" value="UniProtKB-UniRule"/>
</dbReference>
<dbReference type="GO" id="GO:0015035">
    <property type="term" value="F:protein-disulfide reductase activity"/>
    <property type="evidence" value="ECO:0007669"/>
    <property type="project" value="UniProtKB-UniRule"/>
</dbReference>
<dbReference type="GO" id="GO:0006457">
    <property type="term" value="P:protein folding"/>
    <property type="evidence" value="ECO:0007669"/>
    <property type="project" value="InterPro"/>
</dbReference>
<dbReference type="Gene3D" id="1.20.1550.10">
    <property type="entry name" value="DsbB-like"/>
    <property type="match status" value="1"/>
</dbReference>
<dbReference type="HAMAP" id="MF_00286">
    <property type="entry name" value="DsbB"/>
    <property type="match status" value="1"/>
</dbReference>
<dbReference type="InterPro" id="IPR003752">
    <property type="entry name" value="DiS_bond_form_DsbB/BdbC"/>
</dbReference>
<dbReference type="InterPro" id="IPR022920">
    <property type="entry name" value="Disulphide_bond_form_DsbB"/>
</dbReference>
<dbReference type="InterPro" id="IPR050183">
    <property type="entry name" value="DsbB"/>
</dbReference>
<dbReference type="InterPro" id="IPR023380">
    <property type="entry name" value="DsbB-like_sf"/>
</dbReference>
<dbReference type="PANTHER" id="PTHR36570">
    <property type="entry name" value="DISULFIDE BOND FORMATION PROTEIN B"/>
    <property type="match status" value="1"/>
</dbReference>
<dbReference type="PANTHER" id="PTHR36570:SF3">
    <property type="entry name" value="DISULFIDE BOND FORMATION PROTEIN B"/>
    <property type="match status" value="1"/>
</dbReference>
<dbReference type="Pfam" id="PF02600">
    <property type="entry name" value="DsbB"/>
    <property type="match status" value="1"/>
</dbReference>
<dbReference type="SUPFAM" id="SSF158442">
    <property type="entry name" value="DsbB-like"/>
    <property type="match status" value="1"/>
</dbReference>
<name>DSBB_AROAE</name>
<gene>
    <name evidence="1" type="primary">dsbB</name>
    <name type="ordered locus">AZOSEA21980</name>
    <name type="ORF">ebA3876</name>
</gene>
<keyword id="KW-0997">Cell inner membrane</keyword>
<keyword id="KW-1003">Cell membrane</keyword>
<keyword id="KW-0143">Chaperone</keyword>
<keyword id="KW-1015">Disulfide bond</keyword>
<keyword id="KW-0249">Electron transport</keyword>
<keyword id="KW-0472">Membrane</keyword>
<keyword id="KW-0560">Oxidoreductase</keyword>
<keyword id="KW-0676">Redox-active center</keyword>
<keyword id="KW-1185">Reference proteome</keyword>
<keyword id="KW-0812">Transmembrane</keyword>
<keyword id="KW-1133">Transmembrane helix</keyword>
<keyword id="KW-0813">Transport</keyword>